<reference key="1">
    <citation type="journal article" date="2009" name="Appl. Environ. Microbiol.">
        <title>Complete genome sequence of the chemolithoautotrophic marine magnetotactic coccus strain MC-1.</title>
        <authorList>
            <person name="Schubbe S."/>
            <person name="Williams T.J."/>
            <person name="Xie G."/>
            <person name="Kiss H.E."/>
            <person name="Brettin T.S."/>
            <person name="Martinez D."/>
            <person name="Ross C.A."/>
            <person name="Schuler D."/>
            <person name="Cox B.L."/>
            <person name="Nealson K.H."/>
            <person name="Bazylinski D.A."/>
        </authorList>
    </citation>
    <scope>NUCLEOTIDE SEQUENCE [LARGE SCALE GENOMIC DNA]</scope>
    <source>
        <strain>ATCC BAA-1437 / JCM 17883 / MC-1</strain>
    </source>
</reference>
<gene>
    <name evidence="1" type="primary">rpmJ</name>
    <name type="ordered locus">Mmc1_0868</name>
</gene>
<comment type="similarity">
    <text evidence="1">Belongs to the bacterial ribosomal protein bL36 family.</text>
</comment>
<proteinExistence type="inferred from homology"/>
<name>RL36_MAGMM</name>
<sequence>MKVRASVKSICKDCKVIRRNGSVRVICKNPRHKQRQG</sequence>
<feature type="chain" id="PRO_0000302234" description="Large ribosomal subunit protein bL36">
    <location>
        <begin position="1"/>
        <end position="37"/>
    </location>
</feature>
<organism>
    <name type="scientific">Magnetococcus marinus (strain ATCC BAA-1437 / JCM 17883 / MC-1)</name>
    <dbReference type="NCBI Taxonomy" id="156889"/>
    <lineage>
        <taxon>Bacteria</taxon>
        <taxon>Pseudomonadati</taxon>
        <taxon>Pseudomonadota</taxon>
        <taxon>Alphaproteobacteria</taxon>
        <taxon>Magnetococcales</taxon>
        <taxon>Magnetococcaceae</taxon>
        <taxon>Magnetococcus</taxon>
    </lineage>
</organism>
<protein>
    <recommendedName>
        <fullName evidence="1">Large ribosomal subunit protein bL36</fullName>
    </recommendedName>
    <alternativeName>
        <fullName evidence="2">50S ribosomal protein L36</fullName>
    </alternativeName>
</protein>
<dbReference type="EMBL" id="CP000471">
    <property type="protein sequence ID" value="ABK43387.1"/>
    <property type="molecule type" value="Genomic_DNA"/>
</dbReference>
<dbReference type="RefSeq" id="WP_011712546.1">
    <property type="nucleotide sequence ID" value="NC_008576.1"/>
</dbReference>
<dbReference type="SMR" id="A0L5Z4"/>
<dbReference type="STRING" id="156889.Mmc1_0868"/>
<dbReference type="KEGG" id="mgm:Mmc1_0868"/>
<dbReference type="eggNOG" id="COG0257">
    <property type="taxonomic scope" value="Bacteria"/>
</dbReference>
<dbReference type="HOGENOM" id="CLU_135723_6_2_5"/>
<dbReference type="OrthoDB" id="9802520at2"/>
<dbReference type="Proteomes" id="UP000002586">
    <property type="component" value="Chromosome"/>
</dbReference>
<dbReference type="GO" id="GO:0005737">
    <property type="term" value="C:cytoplasm"/>
    <property type="evidence" value="ECO:0007669"/>
    <property type="project" value="UniProtKB-ARBA"/>
</dbReference>
<dbReference type="GO" id="GO:1990904">
    <property type="term" value="C:ribonucleoprotein complex"/>
    <property type="evidence" value="ECO:0007669"/>
    <property type="project" value="UniProtKB-KW"/>
</dbReference>
<dbReference type="GO" id="GO:0005840">
    <property type="term" value="C:ribosome"/>
    <property type="evidence" value="ECO:0007669"/>
    <property type="project" value="UniProtKB-KW"/>
</dbReference>
<dbReference type="GO" id="GO:0003735">
    <property type="term" value="F:structural constituent of ribosome"/>
    <property type="evidence" value="ECO:0007669"/>
    <property type="project" value="InterPro"/>
</dbReference>
<dbReference type="GO" id="GO:0006412">
    <property type="term" value="P:translation"/>
    <property type="evidence" value="ECO:0007669"/>
    <property type="project" value="UniProtKB-UniRule"/>
</dbReference>
<dbReference type="HAMAP" id="MF_00251">
    <property type="entry name" value="Ribosomal_bL36"/>
    <property type="match status" value="1"/>
</dbReference>
<dbReference type="InterPro" id="IPR000473">
    <property type="entry name" value="Ribosomal_bL36"/>
</dbReference>
<dbReference type="InterPro" id="IPR035977">
    <property type="entry name" value="Ribosomal_bL36_sp"/>
</dbReference>
<dbReference type="NCBIfam" id="TIGR01022">
    <property type="entry name" value="rpmJ_bact"/>
    <property type="match status" value="1"/>
</dbReference>
<dbReference type="PANTHER" id="PTHR42888">
    <property type="entry name" value="50S RIBOSOMAL PROTEIN L36, CHLOROPLASTIC"/>
    <property type="match status" value="1"/>
</dbReference>
<dbReference type="PANTHER" id="PTHR42888:SF1">
    <property type="entry name" value="LARGE RIBOSOMAL SUBUNIT PROTEIN BL36C"/>
    <property type="match status" value="1"/>
</dbReference>
<dbReference type="Pfam" id="PF00444">
    <property type="entry name" value="Ribosomal_L36"/>
    <property type="match status" value="1"/>
</dbReference>
<dbReference type="SUPFAM" id="SSF57840">
    <property type="entry name" value="Ribosomal protein L36"/>
    <property type="match status" value="1"/>
</dbReference>
<dbReference type="PROSITE" id="PS00828">
    <property type="entry name" value="RIBOSOMAL_L36"/>
    <property type="match status" value="1"/>
</dbReference>
<keyword id="KW-1185">Reference proteome</keyword>
<keyword id="KW-0687">Ribonucleoprotein</keyword>
<keyword id="KW-0689">Ribosomal protein</keyword>
<accession>A0L5Z4</accession>
<evidence type="ECO:0000255" key="1">
    <source>
        <dbReference type="HAMAP-Rule" id="MF_00251"/>
    </source>
</evidence>
<evidence type="ECO:0000305" key="2"/>